<proteinExistence type="inferred from homology"/>
<reference key="1">
    <citation type="journal article" date="2005" name="Genome Res.">
        <title>Genome sequence of Blochmannia pennsylvanicus indicates parallel evolutionary trends among bacterial mutualists of insects.</title>
        <authorList>
            <person name="Degnan P.H."/>
            <person name="Lazarus A.B."/>
            <person name="Wernegreen J.J."/>
        </authorList>
    </citation>
    <scope>NUCLEOTIDE SEQUENCE [LARGE SCALE GENOMIC DNA]</scope>
    <source>
        <strain>BPEN</strain>
    </source>
</reference>
<gene>
    <name evidence="1" type="primary">hspQ</name>
    <name type="ordered locus">BPEN_431</name>
</gene>
<name>HSPQ_BLOPB</name>
<feature type="chain" id="PRO_0000315300" description="Heat shock protein HspQ">
    <location>
        <begin position="1"/>
        <end position="105"/>
    </location>
</feature>
<protein>
    <recommendedName>
        <fullName evidence="1">Heat shock protein HspQ</fullName>
    </recommendedName>
</protein>
<keyword id="KW-0963">Cytoplasm</keyword>
<keyword id="KW-1185">Reference proteome</keyword>
<keyword id="KW-0346">Stress response</keyword>
<accession>Q492P5</accession>
<evidence type="ECO:0000255" key="1">
    <source>
        <dbReference type="HAMAP-Rule" id="MF_01194"/>
    </source>
</evidence>
<sequence>MIASKFGIGQQVRHKLLGYLGVIIDIDPEYSLEKPTLDEITKNDTLRKSPWYHVVMEDEEGKPMHTYLAEVQLGYENILTHPEQTTLDELSESIRLQLQTPRLRN</sequence>
<comment type="function">
    <text evidence="1">Involved in the degradation of certain denaturated proteins, including DnaA, during heat shock stress.</text>
</comment>
<comment type="subcellular location">
    <subcellularLocation>
        <location evidence="1">Cytoplasm</location>
    </subcellularLocation>
</comment>
<comment type="similarity">
    <text evidence="1">Belongs to the HspQ family.</text>
</comment>
<dbReference type="EMBL" id="CP000016">
    <property type="protein sequence ID" value="AAZ41050.1"/>
    <property type="molecule type" value="Genomic_DNA"/>
</dbReference>
<dbReference type="RefSeq" id="WP_011282960.1">
    <property type="nucleotide sequence ID" value="NC_007292.1"/>
</dbReference>
<dbReference type="SMR" id="Q492P5"/>
<dbReference type="STRING" id="291272.BPEN_431"/>
<dbReference type="KEGG" id="bpn:BPEN_431"/>
<dbReference type="eggNOG" id="COG3785">
    <property type="taxonomic scope" value="Bacteria"/>
</dbReference>
<dbReference type="HOGENOM" id="CLU_123865_1_0_6"/>
<dbReference type="OrthoDB" id="9806050at2"/>
<dbReference type="Proteomes" id="UP000007794">
    <property type="component" value="Chromosome"/>
</dbReference>
<dbReference type="GO" id="GO:0005737">
    <property type="term" value="C:cytoplasm"/>
    <property type="evidence" value="ECO:0007669"/>
    <property type="project" value="UniProtKB-SubCell"/>
</dbReference>
<dbReference type="GO" id="GO:0003677">
    <property type="term" value="F:DNA binding"/>
    <property type="evidence" value="ECO:0007669"/>
    <property type="project" value="InterPro"/>
</dbReference>
<dbReference type="GO" id="GO:0009408">
    <property type="term" value="P:response to heat"/>
    <property type="evidence" value="ECO:0007669"/>
    <property type="project" value="UniProtKB-UniRule"/>
</dbReference>
<dbReference type="Gene3D" id="2.30.30.390">
    <property type="entry name" value="Hemimethylated DNA-binding domain"/>
    <property type="match status" value="1"/>
</dbReference>
<dbReference type="HAMAP" id="MF_01194">
    <property type="entry name" value="HspQ"/>
    <property type="match status" value="1"/>
</dbReference>
<dbReference type="InterPro" id="IPR011722">
    <property type="entry name" value="Hemimethylated_DNA-bd_dom"/>
</dbReference>
<dbReference type="InterPro" id="IPR036623">
    <property type="entry name" value="Hemimethylated_DNA-bd_sf"/>
</dbReference>
<dbReference type="InterPro" id="IPR022866">
    <property type="entry name" value="HspQ"/>
</dbReference>
<dbReference type="NCBIfam" id="NF010729">
    <property type="entry name" value="PRK14129.1"/>
    <property type="match status" value="1"/>
</dbReference>
<dbReference type="NCBIfam" id="TIGR02097">
    <property type="entry name" value="yccV"/>
    <property type="match status" value="1"/>
</dbReference>
<dbReference type="Pfam" id="PF08755">
    <property type="entry name" value="YccV-like"/>
    <property type="match status" value="1"/>
</dbReference>
<dbReference type="SMART" id="SM00992">
    <property type="entry name" value="YccV-like"/>
    <property type="match status" value="1"/>
</dbReference>
<dbReference type="SUPFAM" id="SSF141255">
    <property type="entry name" value="YccV-like"/>
    <property type="match status" value="1"/>
</dbReference>
<organism>
    <name type="scientific">Blochmanniella pennsylvanica (strain BPEN)</name>
    <dbReference type="NCBI Taxonomy" id="291272"/>
    <lineage>
        <taxon>Bacteria</taxon>
        <taxon>Pseudomonadati</taxon>
        <taxon>Pseudomonadota</taxon>
        <taxon>Gammaproteobacteria</taxon>
        <taxon>Enterobacterales</taxon>
        <taxon>Enterobacteriaceae</taxon>
        <taxon>ant endosymbionts</taxon>
        <taxon>Candidatus Blochmanniella</taxon>
    </lineage>
</organism>